<comment type="function">
    <text evidence="1">Cleaves peptides in various proteins in a process that requires ATP hydrolysis. Has a chymotrypsin-like activity. Plays a major role in the degradation of misfolded proteins.</text>
</comment>
<comment type="catalytic activity">
    <reaction evidence="1">
        <text>Hydrolysis of proteins to small peptides in the presence of ATP and magnesium. alpha-casein is the usual test substrate. In the absence of ATP, only oligopeptides shorter than five residues are hydrolyzed (such as succinyl-Leu-Tyr-|-NHMec, and Leu-Tyr-Leu-|-Tyr-Trp, in which cleavage of the -Tyr-|-Leu- and -Tyr-|-Trp bonds also occurs).</text>
        <dbReference type="EC" id="3.4.21.92"/>
    </reaction>
</comment>
<comment type="subunit">
    <text>Component of the chloroplastic Clp protease core complex.</text>
</comment>
<comment type="subcellular location">
    <subcellularLocation>
        <location evidence="1">Plastid</location>
        <location evidence="1">Chloroplast stroma</location>
    </subcellularLocation>
</comment>
<comment type="similarity">
    <text evidence="1">Belongs to the peptidase S14 family.</text>
</comment>
<proteinExistence type="inferred from homology"/>
<accession>Q2QD64</accession>
<accession>A5J1V9</accession>
<accession>Q4VZJ1</accession>
<organism>
    <name type="scientific">Cucumis sativus</name>
    <name type="common">Cucumber</name>
    <dbReference type="NCBI Taxonomy" id="3659"/>
    <lineage>
        <taxon>Eukaryota</taxon>
        <taxon>Viridiplantae</taxon>
        <taxon>Streptophyta</taxon>
        <taxon>Embryophyta</taxon>
        <taxon>Tracheophyta</taxon>
        <taxon>Spermatophyta</taxon>
        <taxon>Magnoliopsida</taxon>
        <taxon>eudicotyledons</taxon>
        <taxon>Gunneridae</taxon>
        <taxon>Pentapetalae</taxon>
        <taxon>rosids</taxon>
        <taxon>fabids</taxon>
        <taxon>Cucurbitales</taxon>
        <taxon>Cucurbitaceae</taxon>
        <taxon>Benincaseae</taxon>
        <taxon>Cucumis</taxon>
    </lineage>
</organism>
<reference key="1">
    <citation type="journal article" date="2006" name="Plant Cell Rep.">
        <title>Complete sequence and organization of the cucumber (Cucumis sativus L. cv. Baekmibaekdadagi) chloroplast genome.</title>
        <authorList>
            <person name="Kim J.-S."/>
            <person name="Jung J.D."/>
            <person name="Lee J.-A."/>
            <person name="Park H.-W."/>
            <person name="Oh K.-H."/>
            <person name="Jeong W.J."/>
            <person name="Choi D.-W."/>
            <person name="Liu J.R."/>
            <person name="Cho K.Y."/>
        </authorList>
    </citation>
    <scope>NUCLEOTIDE SEQUENCE [LARGE SCALE GENOMIC DNA]</scope>
    <source>
        <strain>cv. Baekmibaekdadagi</strain>
    </source>
</reference>
<reference key="2">
    <citation type="journal article" date="2007" name="Cell. Mol. Biol. Lett.">
        <title>The complete structure of the cucumber (Cucumis sativus L.) chloroplast genome: its composition and comparative analysis.</title>
        <authorList>
            <person name="Plader W.W."/>
            <person name="Yukawa Y."/>
            <person name="Sugiura M."/>
            <person name="Malepszy S."/>
        </authorList>
    </citation>
    <scope>NUCLEOTIDE SEQUENCE [LARGE SCALE GENOMIC DNA]</scope>
    <source>
        <strain>cv. Borszczagowski</strain>
    </source>
</reference>
<reference key="3">
    <citation type="journal article" date="2007" name="Genome">
        <title>Sequencing cucumber (Cucumis sativus L.) chloroplast genomes identifies differences between chilling-tolerant and -susceptible cucumber lines.</title>
        <authorList>
            <person name="Chung S.-M."/>
            <person name="Gordon V.S."/>
            <person name="Staub J.E."/>
        </authorList>
    </citation>
    <scope>NUCLEOTIDE SEQUENCE [LARGE SCALE GENOMIC DNA]</scope>
    <source>
        <strain>cv. Chipper</strain>
        <strain>cv. Gy14</strain>
    </source>
</reference>
<protein>
    <recommendedName>
        <fullName evidence="1">ATP-dependent Clp protease proteolytic subunit</fullName>
        <ecNumber evidence="1">3.4.21.92</ecNumber>
    </recommendedName>
    <alternativeName>
        <fullName evidence="1">Endopeptidase Clp</fullName>
    </alternativeName>
</protein>
<sequence>MPVGVPKVPFRLPGEEDASWVDLYNRLYRQRLLFLGQDVNNEISNQIMGLMVYLSIEDGTKDQYLFINSPGGSVIPGVGLFDTMQFVSPDVHTICIGLAASMGSFILVGGEITKRLAFPHARVMIHQPASSFSKGKTGEFVLESTELLNLRETITKVYVQRTGKPLWVISEDLERDVFMSAPEAQAHGIVDLVAV</sequence>
<name>CLPP_CUCSA</name>
<feature type="chain" id="PRO_0000275281" description="ATP-dependent Clp protease proteolytic subunit">
    <location>
        <begin position="1"/>
        <end position="195"/>
    </location>
</feature>
<feature type="active site" description="Nucleophile" evidence="1">
    <location>
        <position position="101"/>
    </location>
</feature>
<feature type="active site" evidence="1">
    <location>
        <position position="126"/>
    </location>
</feature>
<feature type="sequence conflict" description="In Ref. 2; CAJ00784." evidence="2" ref="2">
    <original>I</original>
    <variation>M</variation>
    <location>
        <position position="96"/>
    </location>
</feature>
<feature type="sequence conflict" description="In Ref. 2; CAJ00784." evidence="2" ref="2">
    <original>S</original>
    <variation>P</variation>
    <location>
        <position position="170"/>
    </location>
</feature>
<feature type="sequence conflict" description="In Ref. 2; CAJ00784." evidence="2" ref="2">
    <original>L</original>
    <variation>M</variation>
    <location>
        <position position="173"/>
    </location>
</feature>
<geneLocation type="chloroplast"/>
<keyword id="KW-0150">Chloroplast</keyword>
<keyword id="KW-0378">Hydrolase</keyword>
<keyword id="KW-0934">Plastid</keyword>
<keyword id="KW-0645">Protease</keyword>
<keyword id="KW-0720">Serine protease</keyword>
<gene>
    <name evidence="1" type="primary">clpP</name>
    <name type="ordered locus">CsCp067</name>
</gene>
<evidence type="ECO:0000255" key="1">
    <source>
        <dbReference type="HAMAP-Rule" id="MF_00444"/>
    </source>
</evidence>
<evidence type="ECO:0000305" key="2"/>
<dbReference type="EC" id="3.4.21.92" evidence="1"/>
<dbReference type="EMBL" id="DQ119058">
    <property type="protein sequence ID" value="AAZ94675.1"/>
    <property type="molecule type" value="Genomic_DNA"/>
</dbReference>
<dbReference type="EMBL" id="AJ970307">
    <property type="protein sequence ID" value="CAJ00784.1"/>
    <property type="molecule type" value="Genomic_DNA"/>
</dbReference>
<dbReference type="EMBL" id="DQ865975">
    <property type="protein sequence ID" value="ABI97441.1"/>
    <property type="molecule type" value="Genomic_DNA"/>
</dbReference>
<dbReference type="EMBL" id="DQ865976">
    <property type="protein sequence ID" value="ABI98770.1"/>
    <property type="molecule type" value="Genomic_DNA"/>
</dbReference>
<dbReference type="RefSeq" id="YP_247625.1">
    <property type="nucleotide sequence ID" value="NC_007144.1"/>
</dbReference>
<dbReference type="SMR" id="Q2QD64"/>
<dbReference type="MEROPS" id="S14.002"/>
<dbReference type="GeneID" id="3429380"/>
<dbReference type="KEGG" id="csv:3429380"/>
<dbReference type="OrthoDB" id="1882605at2759"/>
<dbReference type="GO" id="GO:0009570">
    <property type="term" value="C:chloroplast stroma"/>
    <property type="evidence" value="ECO:0007669"/>
    <property type="project" value="UniProtKB-SubCell"/>
</dbReference>
<dbReference type="GO" id="GO:0004176">
    <property type="term" value="F:ATP-dependent peptidase activity"/>
    <property type="evidence" value="ECO:0007669"/>
    <property type="project" value="InterPro"/>
</dbReference>
<dbReference type="GO" id="GO:0004252">
    <property type="term" value="F:serine-type endopeptidase activity"/>
    <property type="evidence" value="ECO:0007669"/>
    <property type="project" value="UniProtKB-UniRule"/>
</dbReference>
<dbReference type="GO" id="GO:0006508">
    <property type="term" value="P:proteolysis"/>
    <property type="evidence" value="ECO:0007669"/>
    <property type="project" value="UniProtKB-UniRule"/>
</dbReference>
<dbReference type="CDD" id="cd07017">
    <property type="entry name" value="S14_ClpP_2"/>
    <property type="match status" value="1"/>
</dbReference>
<dbReference type="FunFam" id="3.90.226.10:FF:000006">
    <property type="entry name" value="ATP-dependent Clp protease proteolytic subunit"/>
    <property type="match status" value="1"/>
</dbReference>
<dbReference type="Gene3D" id="3.90.226.10">
    <property type="entry name" value="2-enoyl-CoA Hydratase, Chain A, domain 1"/>
    <property type="match status" value="1"/>
</dbReference>
<dbReference type="HAMAP" id="MF_00444">
    <property type="entry name" value="ClpP"/>
    <property type="match status" value="1"/>
</dbReference>
<dbReference type="InterPro" id="IPR001907">
    <property type="entry name" value="ClpP"/>
</dbReference>
<dbReference type="InterPro" id="IPR029045">
    <property type="entry name" value="ClpP/crotonase-like_dom_sf"/>
</dbReference>
<dbReference type="InterPro" id="IPR023562">
    <property type="entry name" value="ClpP/TepA"/>
</dbReference>
<dbReference type="InterPro" id="IPR033135">
    <property type="entry name" value="ClpP_His_AS"/>
</dbReference>
<dbReference type="InterPro" id="IPR018215">
    <property type="entry name" value="ClpP_Ser_AS"/>
</dbReference>
<dbReference type="PANTHER" id="PTHR10381">
    <property type="entry name" value="ATP-DEPENDENT CLP PROTEASE PROTEOLYTIC SUBUNIT"/>
    <property type="match status" value="1"/>
</dbReference>
<dbReference type="PANTHER" id="PTHR10381:SF15">
    <property type="entry name" value="CHLOROPLASTIC ATP-DEPENDENT CLP PROTEASE PROTEOLYTIC SUBUNIT 1"/>
    <property type="match status" value="1"/>
</dbReference>
<dbReference type="Pfam" id="PF00574">
    <property type="entry name" value="CLP_protease"/>
    <property type="match status" value="1"/>
</dbReference>
<dbReference type="PRINTS" id="PR00127">
    <property type="entry name" value="CLPPROTEASEP"/>
</dbReference>
<dbReference type="SUPFAM" id="SSF52096">
    <property type="entry name" value="ClpP/crotonase"/>
    <property type="match status" value="1"/>
</dbReference>
<dbReference type="PROSITE" id="PS00382">
    <property type="entry name" value="CLP_PROTEASE_HIS"/>
    <property type="match status" value="1"/>
</dbReference>
<dbReference type="PROSITE" id="PS00381">
    <property type="entry name" value="CLP_PROTEASE_SER"/>
    <property type="match status" value="1"/>
</dbReference>